<reference key="1">
    <citation type="journal article" date="2005" name="Science">
        <title>The transcriptional landscape of the mammalian genome.</title>
        <authorList>
            <person name="Carninci P."/>
            <person name="Kasukawa T."/>
            <person name="Katayama S."/>
            <person name="Gough J."/>
            <person name="Frith M.C."/>
            <person name="Maeda N."/>
            <person name="Oyama R."/>
            <person name="Ravasi T."/>
            <person name="Lenhard B."/>
            <person name="Wells C."/>
            <person name="Kodzius R."/>
            <person name="Shimokawa K."/>
            <person name="Bajic V.B."/>
            <person name="Brenner S.E."/>
            <person name="Batalov S."/>
            <person name="Forrest A.R."/>
            <person name="Zavolan M."/>
            <person name="Davis M.J."/>
            <person name="Wilming L.G."/>
            <person name="Aidinis V."/>
            <person name="Allen J.E."/>
            <person name="Ambesi-Impiombato A."/>
            <person name="Apweiler R."/>
            <person name="Aturaliya R.N."/>
            <person name="Bailey T.L."/>
            <person name="Bansal M."/>
            <person name="Baxter L."/>
            <person name="Beisel K.W."/>
            <person name="Bersano T."/>
            <person name="Bono H."/>
            <person name="Chalk A.M."/>
            <person name="Chiu K.P."/>
            <person name="Choudhary V."/>
            <person name="Christoffels A."/>
            <person name="Clutterbuck D.R."/>
            <person name="Crowe M.L."/>
            <person name="Dalla E."/>
            <person name="Dalrymple B.P."/>
            <person name="de Bono B."/>
            <person name="Della Gatta G."/>
            <person name="di Bernardo D."/>
            <person name="Down T."/>
            <person name="Engstrom P."/>
            <person name="Fagiolini M."/>
            <person name="Faulkner G."/>
            <person name="Fletcher C.F."/>
            <person name="Fukushima T."/>
            <person name="Furuno M."/>
            <person name="Futaki S."/>
            <person name="Gariboldi M."/>
            <person name="Georgii-Hemming P."/>
            <person name="Gingeras T.R."/>
            <person name="Gojobori T."/>
            <person name="Green R.E."/>
            <person name="Gustincich S."/>
            <person name="Harbers M."/>
            <person name="Hayashi Y."/>
            <person name="Hensch T.K."/>
            <person name="Hirokawa N."/>
            <person name="Hill D."/>
            <person name="Huminiecki L."/>
            <person name="Iacono M."/>
            <person name="Ikeo K."/>
            <person name="Iwama A."/>
            <person name="Ishikawa T."/>
            <person name="Jakt M."/>
            <person name="Kanapin A."/>
            <person name="Katoh M."/>
            <person name="Kawasawa Y."/>
            <person name="Kelso J."/>
            <person name="Kitamura H."/>
            <person name="Kitano H."/>
            <person name="Kollias G."/>
            <person name="Krishnan S.P."/>
            <person name="Kruger A."/>
            <person name="Kummerfeld S.K."/>
            <person name="Kurochkin I.V."/>
            <person name="Lareau L.F."/>
            <person name="Lazarevic D."/>
            <person name="Lipovich L."/>
            <person name="Liu J."/>
            <person name="Liuni S."/>
            <person name="McWilliam S."/>
            <person name="Madan Babu M."/>
            <person name="Madera M."/>
            <person name="Marchionni L."/>
            <person name="Matsuda H."/>
            <person name="Matsuzawa S."/>
            <person name="Miki H."/>
            <person name="Mignone F."/>
            <person name="Miyake S."/>
            <person name="Morris K."/>
            <person name="Mottagui-Tabar S."/>
            <person name="Mulder N."/>
            <person name="Nakano N."/>
            <person name="Nakauchi H."/>
            <person name="Ng P."/>
            <person name="Nilsson R."/>
            <person name="Nishiguchi S."/>
            <person name="Nishikawa S."/>
            <person name="Nori F."/>
            <person name="Ohara O."/>
            <person name="Okazaki Y."/>
            <person name="Orlando V."/>
            <person name="Pang K.C."/>
            <person name="Pavan W.J."/>
            <person name="Pavesi G."/>
            <person name="Pesole G."/>
            <person name="Petrovsky N."/>
            <person name="Piazza S."/>
            <person name="Reed J."/>
            <person name="Reid J.F."/>
            <person name="Ring B.Z."/>
            <person name="Ringwald M."/>
            <person name="Rost B."/>
            <person name="Ruan Y."/>
            <person name="Salzberg S.L."/>
            <person name="Sandelin A."/>
            <person name="Schneider C."/>
            <person name="Schoenbach C."/>
            <person name="Sekiguchi K."/>
            <person name="Semple C.A."/>
            <person name="Seno S."/>
            <person name="Sessa L."/>
            <person name="Sheng Y."/>
            <person name="Shibata Y."/>
            <person name="Shimada H."/>
            <person name="Shimada K."/>
            <person name="Silva D."/>
            <person name="Sinclair B."/>
            <person name="Sperling S."/>
            <person name="Stupka E."/>
            <person name="Sugiura K."/>
            <person name="Sultana R."/>
            <person name="Takenaka Y."/>
            <person name="Taki K."/>
            <person name="Tammoja K."/>
            <person name="Tan S.L."/>
            <person name="Tang S."/>
            <person name="Taylor M.S."/>
            <person name="Tegner J."/>
            <person name="Teichmann S.A."/>
            <person name="Ueda H.R."/>
            <person name="van Nimwegen E."/>
            <person name="Verardo R."/>
            <person name="Wei C.L."/>
            <person name="Yagi K."/>
            <person name="Yamanishi H."/>
            <person name="Zabarovsky E."/>
            <person name="Zhu S."/>
            <person name="Zimmer A."/>
            <person name="Hide W."/>
            <person name="Bult C."/>
            <person name="Grimmond S.M."/>
            <person name="Teasdale R.D."/>
            <person name="Liu E.T."/>
            <person name="Brusic V."/>
            <person name="Quackenbush J."/>
            <person name="Wahlestedt C."/>
            <person name="Mattick J.S."/>
            <person name="Hume D.A."/>
            <person name="Kai C."/>
            <person name="Sasaki D."/>
            <person name="Tomaru Y."/>
            <person name="Fukuda S."/>
            <person name="Kanamori-Katayama M."/>
            <person name="Suzuki M."/>
            <person name="Aoki J."/>
            <person name="Arakawa T."/>
            <person name="Iida J."/>
            <person name="Imamura K."/>
            <person name="Itoh M."/>
            <person name="Kato T."/>
            <person name="Kawaji H."/>
            <person name="Kawagashira N."/>
            <person name="Kawashima T."/>
            <person name="Kojima M."/>
            <person name="Kondo S."/>
            <person name="Konno H."/>
            <person name="Nakano K."/>
            <person name="Ninomiya N."/>
            <person name="Nishio T."/>
            <person name="Okada M."/>
            <person name="Plessy C."/>
            <person name="Shibata K."/>
            <person name="Shiraki T."/>
            <person name="Suzuki S."/>
            <person name="Tagami M."/>
            <person name="Waki K."/>
            <person name="Watahiki A."/>
            <person name="Okamura-Oho Y."/>
            <person name="Suzuki H."/>
            <person name="Kawai J."/>
            <person name="Hayashizaki Y."/>
        </authorList>
    </citation>
    <scope>NUCLEOTIDE SEQUENCE [LARGE SCALE MRNA] (ISOFORM 2)</scope>
    <source>
        <strain>C57BL/6J</strain>
        <tissue>Testis</tissue>
    </source>
</reference>
<reference key="2">
    <citation type="journal article" date="2009" name="PLoS Biol.">
        <title>Lineage-specific biology revealed by a finished genome assembly of the mouse.</title>
        <authorList>
            <person name="Church D.M."/>
            <person name="Goodstadt L."/>
            <person name="Hillier L.W."/>
            <person name="Zody M.C."/>
            <person name="Goldstein S."/>
            <person name="She X."/>
            <person name="Bult C.J."/>
            <person name="Agarwala R."/>
            <person name="Cherry J.L."/>
            <person name="DiCuccio M."/>
            <person name="Hlavina W."/>
            <person name="Kapustin Y."/>
            <person name="Meric P."/>
            <person name="Maglott D."/>
            <person name="Birtle Z."/>
            <person name="Marques A.C."/>
            <person name="Graves T."/>
            <person name="Zhou S."/>
            <person name="Teague B."/>
            <person name="Potamousis K."/>
            <person name="Churas C."/>
            <person name="Place M."/>
            <person name="Herschleb J."/>
            <person name="Runnheim R."/>
            <person name="Forrest D."/>
            <person name="Amos-Landgraf J."/>
            <person name="Schwartz D.C."/>
            <person name="Cheng Z."/>
            <person name="Lindblad-Toh K."/>
            <person name="Eichler E.E."/>
            <person name="Ponting C.P."/>
        </authorList>
    </citation>
    <scope>NUCLEOTIDE SEQUENCE [LARGE SCALE GENOMIC DNA]</scope>
    <source>
        <strain>C57BL/6J</strain>
    </source>
</reference>
<reference key="3">
    <citation type="journal article" date="2016" name="PLoS Genet.">
        <title>Alignment of homologous chromosomes and effective repair of programmed DNA double-strand breaks during mouse meiosis require the minichromosome maintenance domain containing 2 (MCMDC2) protein.</title>
        <authorList>
            <person name="Finsterbusch F."/>
            <person name="Ravindranathan R."/>
            <person name="Dereli I."/>
            <person name="Stanzione M."/>
            <person name="Traenkner D."/>
            <person name="Toth A."/>
        </authorList>
    </citation>
    <scope>FUNCTION</scope>
    <scope>DISRUPTION PHENOTYPE</scope>
    <scope>TISSUE SPECIFICITY</scope>
</reference>
<reference key="4">
    <citation type="journal article" date="2017" name="Genetics">
        <title>Repair of meiotic DNA breaks and homolog pairing in mouse meiosis requires a minichromosome maintenance (MCM) paralog.</title>
        <authorList>
            <person name="McNairn A.J."/>
            <person name="Rinaldi V.D."/>
            <person name="Schimenti J.C."/>
        </authorList>
    </citation>
    <scope>FUNCTION</scope>
    <scope>DISRUPTION PHENOTYPE</scope>
    <scope>TISSUE SPECIFICITY</scope>
</reference>
<gene>
    <name type="primary">Mcmdc2</name>
</gene>
<comment type="function">
    <text evidence="2 3">Plays an important role in meiotic recombination and associated DNA double-strand break repair.</text>
</comment>
<comment type="alternative products">
    <event type="alternative splicing"/>
    <isoform>
        <id>E9Q956-1</id>
        <name>1</name>
        <sequence type="displayed"/>
    </isoform>
    <isoform>
        <id>E9Q956-2</id>
        <name>2</name>
        <sequence type="described" ref="VSP_042394 VSP_042395 VSP_042396"/>
    </isoform>
</comment>
<comment type="tissue specificity">
    <text evidence="2 3">Predominantly expressed in the gonads and the brain. Not detected in the heart, lung, nor embryonic fibroblasts.</text>
</comment>
<comment type="disruption phenotype">
    <text evidence="2 3">Mutant mice are viable and show no overt phenotype. However, both males and females are sterile. Males fail to produce spermatozoa, and formation of primordial follicles is disrupted in females.</text>
</comment>
<proteinExistence type="evidence at transcript level"/>
<protein>
    <recommendedName>
        <fullName>Minichromosome maintenance domain-containing protein 2</fullName>
        <shortName>MCM domain-containing protein 2</shortName>
    </recommendedName>
</protein>
<dbReference type="EMBL" id="AK031395">
    <property type="protein sequence ID" value="BAC27383.1"/>
    <property type="molecule type" value="mRNA"/>
</dbReference>
<dbReference type="EMBL" id="AC102570">
    <property type="status" value="NOT_ANNOTATED_CDS"/>
    <property type="molecule type" value="Genomic_DNA"/>
</dbReference>
<dbReference type="CCDS" id="CCDS48215.1">
    <molecule id="E9Q956-1"/>
</dbReference>
<dbReference type="RefSeq" id="NP_808390.2">
    <molecule id="E9Q956-1"/>
    <property type="nucleotide sequence ID" value="NM_177722.3"/>
</dbReference>
<dbReference type="RefSeq" id="XP_011236678.1">
    <molecule id="E9Q956-1"/>
    <property type="nucleotide sequence ID" value="XM_011238376.3"/>
</dbReference>
<dbReference type="SMR" id="E9Q956"/>
<dbReference type="FunCoup" id="E9Q956">
    <property type="interactions" value="8"/>
</dbReference>
<dbReference type="STRING" id="10090.ENSMUSP00000128620"/>
<dbReference type="PhosphoSitePlus" id="E9Q956"/>
<dbReference type="PaxDb" id="10090-ENSMUSP00000120577"/>
<dbReference type="ProteomicsDB" id="292280">
    <molecule id="E9Q956-1"/>
</dbReference>
<dbReference type="ProteomicsDB" id="292281">
    <molecule id="E9Q956-2"/>
</dbReference>
<dbReference type="Antibodypedia" id="24923">
    <property type="antibodies" value="80 antibodies from 15 providers"/>
</dbReference>
<dbReference type="Ensembl" id="ENSMUST00000052843.12">
    <molecule id="E9Q956-2"/>
    <property type="protein sequence ID" value="ENSMUSP00000054715.6"/>
    <property type="gene ID" value="ENSMUSG00000046101.17"/>
</dbReference>
<dbReference type="Ensembl" id="ENSMUST00000171802.8">
    <molecule id="E9Q956-1"/>
    <property type="protein sequence ID" value="ENSMUSP00000128620.2"/>
    <property type="gene ID" value="ENSMUSG00000046101.17"/>
</dbReference>
<dbReference type="GeneID" id="240697"/>
<dbReference type="KEGG" id="mmu:240697"/>
<dbReference type="UCSC" id="uc007agz.1">
    <molecule id="E9Q956-2"/>
    <property type="organism name" value="mouse"/>
</dbReference>
<dbReference type="UCSC" id="uc011wie.1">
    <molecule id="E9Q956-1"/>
    <property type="organism name" value="mouse"/>
</dbReference>
<dbReference type="AGR" id="MGI:3045334"/>
<dbReference type="CTD" id="157777"/>
<dbReference type="MGI" id="MGI:3045334">
    <property type="gene designation" value="Mcmdc2"/>
</dbReference>
<dbReference type="VEuPathDB" id="HostDB:ENSMUSG00000046101"/>
<dbReference type="eggNOG" id="KOG0480">
    <property type="taxonomic scope" value="Eukaryota"/>
</dbReference>
<dbReference type="GeneTree" id="ENSGT01110000267230"/>
<dbReference type="HOGENOM" id="CLU_032817_1_0_1"/>
<dbReference type="InParanoid" id="E9Q956"/>
<dbReference type="OrthoDB" id="29515at9989"/>
<dbReference type="TreeFam" id="TF332272"/>
<dbReference type="BioGRID-ORCS" id="240697">
    <property type="hits" value="1 hit in 76 CRISPR screens"/>
</dbReference>
<dbReference type="ChiTaRS" id="Mcmdc2">
    <property type="organism name" value="mouse"/>
</dbReference>
<dbReference type="PRO" id="PR:E9Q956"/>
<dbReference type="Proteomes" id="UP000000589">
    <property type="component" value="Chromosome 1"/>
</dbReference>
<dbReference type="RNAct" id="E9Q956">
    <property type="molecule type" value="protein"/>
</dbReference>
<dbReference type="Bgee" id="ENSMUSG00000046101">
    <property type="expression patterns" value="Expressed in spermatocyte and 60 other cell types or tissues"/>
</dbReference>
<dbReference type="ExpressionAtlas" id="E9Q956">
    <property type="expression patterns" value="baseline and differential"/>
</dbReference>
<dbReference type="GO" id="GO:0005524">
    <property type="term" value="F:ATP binding"/>
    <property type="evidence" value="ECO:0007669"/>
    <property type="project" value="InterPro"/>
</dbReference>
<dbReference type="GO" id="GO:0003677">
    <property type="term" value="F:DNA binding"/>
    <property type="evidence" value="ECO:0007669"/>
    <property type="project" value="InterPro"/>
</dbReference>
<dbReference type="GO" id="GO:1990918">
    <property type="term" value="P:double-strand break repair involved in meiotic recombination"/>
    <property type="evidence" value="ECO:0000315"/>
    <property type="project" value="MGI"/>
</dbReference>
<dbReference type="GO" id="GO:0042140">
    <property type="term" value="P:late meiotic recombination nodule assembly"/>
    <property type="evidence" value="ECO:0000315"/>
    <property type="project" value="MGI"/>
</dbReference>
<dbReference type="GO" id="GO:0007146">
    <property type="term" value="P:meiotic recombination nodule assembly"/>
    <property type="evidence" value="ECO:0000315"/>
    <property type="project" value="MGI"/>
</dbReference>
<dbReference type="GO" id="GO:0048477">
    <property type="term" value="P:oogenesis"/>
    <property type="evidence" value="ECO:0000315"/>
    <property type="project" value="MGI"/>
</dbReference>
<dbReference type="GO" id="GO:0007283">
    <property type="term" value="P:spermatogenesis"/>
    <property type="evidence" value="ECO:0000315"/>
    <property type="project" value="MGI"/>
</dbReference>
<dbReference type="GO" id="GO:0007130">
    <property type="term" value="P:synaptonemal complex assembly"/>
    <property type="evidence" value="ECO:0000315"/>
    <property type="project" value="MGI"/>
</dbReference>
<dbReference type="FunFam" id="3.40.50.300:FF:001155">
    <property type="entry name" value="minichromosome maintenance domain-containing protein 2"/>
    <property type="match status" value="1"/>
</dbReference>
<dbReference type="Gene3D" id="3.40.50.300">
    <property type="entry name" value="P-loop containing nucleotide triphosphate hydrolases"/>
    <property type="match status" value="1"/>
</dbReference>
<dbReference type="InterPro" id="IPR031327">
    <property type="entry name" value="MCM"/>
</dbReference>
<dbReference type="InterPro" id="IPR041562">
    <property type="entry name" value="MCM_lid"/>
</dbReference>
<dbReference type="InterPro" id="IPR027417">
    <property type="entry name" value="P-loop_NTPase"/>
</dbReference>
<dbReference type="PANTHER" id="PTHR11630">
    <property type="entry name" value="DNA REPLICATION LICENSING FACTOR MCM FAMILY MEMBER"/>
    <property type="match status" value="1"/>
</dbReference>
<dbReference type="PANTHER" id="PTHR11630:SF75">
    <property type="entry name" value="MINICHROMOSOME MAINTENANCE DOMAIN-CONTAINING PROTEIN 2"/>
    <property type="match status" value="1"/>
</dbReference>
<dbReference type="Pfam" id="PF17855">
    <property type="entry name" value="MCM_lid"/>
    <property type="match status" value="1"/>
</dbReference>
<dbReference type="SMART" id="SM00350">
    <property type="entry name" value="MCM"/>
    <property type="match status" value="1"/>
</dbReference>
<accession>E9Q956</accession>
<accession>D3YTV7</accession>
<accession>D6RHP3</accession>
<accession>Q8CD58</accession>
<name>MCMD2_MOUSE</name>
<feature type="chain" id="PRO_0000415824" description="Minichromosome maintenance domain-containing protein 2">
    <location>
        <begin position="1"/>
        <end position="681"/>
    </location>
</feature>
<feature type="domain" description="MCM">
    <location>
        <begin position="533"/>
        <end position="621"/>
    </location>
</feature>
<feature type="modified residue" description="Phosphoserine" evidence="1">
    <location>
        <position position="292"/>
    </location>
</feature>
<feature type="splice variant" id="VSP_042394" description="In isoform 2." evidence="4">
    <location>
        <begin position="76"/>
        <end position="89"/>
    </location>
</feature>
<feature type="splice variant" id="VSP_042395" description="In isoform 2." evidence="4">
    <original>LLN</original>
    <variation>VSL</variation>
    <location>
        <begin position="359"/>
        <end position="361"/>
    </location>
</feature>
<feature type="splice variant" id="VSP_042396" description="In isoform 2." evidence="4">
    <location>
        <begin position="362"/>
        <end position="681"/>
    </location>
</feature>
<organism>
    <name type="scientific">Mus musculus</name>
    <name type="common">Mouse</name>
    <dbReference type="NCBI Taxonomy" id="10090"/>
    <lineage>
        <taxon>Eukaryota</taxon>
        <taxon>Metazoa</taxon>
        <taxon>Chordata</taxon>
        <taxon>Craniata</taxon>
        <taxon>Vertebrata</taxon>
        <taxon>Euteleostomi</taxon>
        <taxon>Mammalia</taxon>
        <taxon>Eutheria</taxon>
        <taxon>Euarchontoglires</taxon>
        <taxon>Glires</taxon>
        <taxon>Rodentia</taxon>
        <taxon>Myomorpha</taxon>
        <taxon>Muroidea</taxon>
        <taxon>Muridae</taxon>
        <taxon>Murinae</taxon>
        <taxon>Mus</taxon>
        <taxon>Mus</taxon>
    </lineage>
</organism>
<keyword id="KW-0025">Alternative splicing</keyword>
<keyword id="KW-0227">DNA damage</keyword>
<keyword id="KW-0234">DNA repair</keyword>
<keyword id="KW-0469">Meiosis</keyword>
<keyword id="KW-0597">Phosphoprotein</keyword>
<keyword id="KW-1185">Reference proteome</keyword>
<evidence type="ECO:0000250" key="1">
    <source>
        <dbReference type="UniProtKB" id="Q4G0Z9"/>
    </source>
</evidence>
<evidence type="ECO:0000269" key="2">
    <source>
    </source>
</evidence>
<evidence type="ECO:0000269" key="3">
    <source>
    </source>
</evidence>
<evidence type="ECO:0000303" key="4">
    <source>
    </source>
</evidence>
<sequence length="681" mass="76015">METLQMKEAALVYLDRSGGLQKFIDDCKSYNDSKQSYAVYRFSILIDPCDVVELDADLGNHILHHPLKAARVFQSVCFVAVKTLSLIGQLQTETQINIVLKLTHLPALPSYTLDLCEFPLNYASQRFYMMQGIVIAMTTITKYTQGARFLCSDGVCPLSKGFQYVRVHVPGATESATVRNDFLCSLCSSSLQEDRKFRVLGDKQIVEIITTKMFHAFQGDSKNQPFRFQSLGIFLRDELVNKMKIGNEYKIIGIPVCVKTSQTALCVEANNITPHTAKVPLGISDNFRRLLSLTSSSCWKFTAMLANVFASQIVAPGTYNLLKLCLLMSLVQTRDCNREREDCLDILVITSDTLLVDRLLNFSMNLVSRGIRHPVCTEVFPTVSRNKYGTGAVSIQAGSALLAKGGICFIGDLTSHKKDKLEQLQSALESRSVTVFIPGKKFGDDFDQQMTFPIQCSFWSFVDMDSSSRRNVQKTSTLIGQMDCSLIPANLAEAFGLLINCSEASPCHPLLPTVQHTLKKAVEPEGLLYLASKQFTTEDFEKLLAFAKSLNMEFSLEAERMIHGYYLASRRIRTDSIHGSKLSASALKYLVSLSEAHARLSLRTTVLREDALIAALLLEISLTLRYGATPFCVAPNALFPFELYNEEYLEQRDLYLTQCQQQLQQFIATCGPGTTVFSSDE</sequence>